<organismHost>
    <name type="scientific">Homo sapiens</name>
    <name type="common">Human</name>
    <dbReference type="NCBI Taxonomy" id="9606"/>
</organismHost>
<feature type="chain" id="PRO_0000369466" description="Non-structural glycoprotein 4">
    <location>
        <begin position="1"/>
        <end position="175"/>
    </location>
</feature>
<feature type="topological domain" description="Lumenal" evidence="1">
    <location>
        <begin position="1"/>
        <end position="28"/>
    </location>
</feature>
<feature type="transmembrane region" description="Helical; Signal-anchor for type III membrane protein" evidence="1">
    <location>
        <begin position="29"/>
        <end position="51"/>
    </location>
</feature>
<feature type="topological domain" description="Cytoplasmic" evidence="1">
    <location>
        <begin position="52"/>
        <end position="175"/>
    </location>
</feature>
<feature type="binding site" evidence="1">
    <location>
        <position position="120"/>
    </location>
    <ligand>
        <name>Ca(2+)</name>
        <dbReference type="ChEBI" id="CHEBI:29108"/>
    </ligand>
</feature>
<feature type="binding site" evidence="1">
    <location>
        <position position="123"/>
    </location>
    <ligand>
        <name>Ca(2+)</name>
        <dbReference type="ChEBI" id="CHEBI:29108"/>
    </ligand>
</feature>
<feature type="glycosylation site" description="N-linked (GlcNAc...) asparagine; by host" evidence="1">
    <location>
        <position position="8"/>
    </location>
</feature>
<feature type="glycosylation site" description="N-linked (GlcNAc...) asparagine; by host" evidence="1">
    <location>
        <position position="18"/>
    </location>
</feature>
<name>NSP4_ROT41</name>
<sequence>MDKLTDLNYTLSVITLMNSTLHKILEDPGMAYFPYIASVLTVLFTLHKASIPTMKIALKTSRCSYKVIKYCIVTIFNTLLKLAGYKEQITTKDEIEKQMDRVVREMRRQLEMIDKLTTREIEQVELLRRIYDRLTVQKTDEIDMSKEINQKNVRTLDEWENGKNPYEPSEVTASL</sequence>
<evidence type="ECO:0000255" key="1">
    <source>
        <dbReference type="HAMAP-Rule" id="MF_04091"/>
    </source>
</evidence>
<dbReference type="EMBL" id="AY740732">
    <property type="protein sequence ID" value="AAU43790.1"/>
    <property type="molecule type" value="Genomic_RNA"/>
</dbReference>
<dbReference type="SMR" id="Q3ZK64"/>
<dbReference type="Proteomes" id="UP000008655">
    <property type="component" value="Genome"/>
</dbReference>
<dbReference type="GO" id="GO:0005576">
    <property type="term" value="C:extracellular region"/>
    <property type="evidence" value="ECO:0007669"/>
    <property type="project" value="UniProtKB-SubCell"/>
</dbReference>
<dbReference type="GO" id="GO:0044155">
    <property type="term" value="C:host caveola"/>
    <property type="evidence" value="ECO:0007669"/>
    <property type="project" value="UniProtKB-SubCell"/>
</dbReference>
<dbReference type="GO" id="GO:0044169">
    <property type="term" value="C:host cell rough endoplasmic reticulum membrane"/>
    <property type="evidence" value="ECO:0007669"/>
    <property type="project" value="UniProtKB-SubCell"/>
</dbReference>
<dbReference type="GO" id="GO:0016020">
    <property type="term" value="C:membrane"/>
    <property type="evidence" value="ECO:0007669"/>
    <property type="project" value="UniProtKB-UniRule"/>
</dbReference>
<dbReference type="GO" id="GO:0015267">
    <property type="term" value="F:channel activity"/>
    <property type="evidence" value="ECO:0007669"/>
    <property type="project" value="UniProtKB-KW"/>
</dbReference>
<dbReference type="GO" id="GO:0046872">
    <property type="term" value="F:metal ion binding"/>
    <property type="evidence" value="ECO:0007669"/>
    <property type="project" value="UniProtKB-UniRule"/>
</dbReference>
<dbReference type="GO" id="GO:0090729">
    <property type="term" value="F:toxin activity"/>
    <property type="evidence" value="ECO:0007669"/>
    <property type="project" value="UniProtKB-UniRule"/>
</dbReference>
<dbReference type="GO" id="GO:0034220">
    <property type="term" value="P:monoatomic ion transmembrane transport"/>
    <property type="evidence" value="ECO:0007669"/>
    <property type="project" value="UniProtKB-KW"/>
</dbReference>
<dbReference type="GO" id="GO:0039520">
    <property type="term" value="P:symbiont-mediated activation of host autophagy"/>
    <property type="evidence" value="ECO:0007669"/>
    <property type="project" value="UniProtKB-KW"/>
</dbReference>
<dbReference type="GO" id="GO:0016032">
    <property type="term" value="P:viral process"/>
    <property type="evidence" value="ECO:0007669"/>
    <property type="project" value="UniProtKB-UniRule"/>
</dbReference>
<dbReference type="Gene3D" id="1.20.5.430">
    <property type="match status" value="1"/>
</dbReference>
<dbReference type="HAMAP" id="MF_04091">
    <property type="entry name" value="ROTA_NSP4"/>
    <property type="match status" value="1"/>
</dbReference>
<dbReference type="InterPro" id="IPR002107">
    <property type="entry name" value="Rotavirus_NSP4"/>
</dbReference>
<dbReference type="Pfam" id="PF01452">
    <property type="entry name" value="Rota_NSP4"/>
    <property type="match status" value="1"/>
</dbReference>
<dbReference type="SUPFAM" id="SSF58030">
    <property type="entry name" value="Rotavirus nonstructural proteins"/>
    <property type="match status" value="1"/>
</dbReference>
<keyword id="KW-1072">Activation of host autophagy by virus</keyword>
<keyword id="KW-0106">Calcium</keyword>
<keyword id="KW-0260">Enterotoxin</keyword>
<keyword id="KW-0325">Glycoprotein</keyword>
<keyword id="KW-1038">Host endoplasmic reticulum</keyword>
<keyword id="KW-1043">Host membrane</keyword>
<keyword id="KW-0945">Host-virus interaction</keyword>
<keyword id="KW-0407">Ion channel</keyword>
<keyword id="KW-0406">Ion transport</keyword>
<keyword id="KW-0472">Membrane</keyword>
<keyword id="KW-0479">Metal-binding</keyword>
<keyword id="KW-0964">Secreted</keyword>
<keyword id="KW-0735">Signal-anchor</keyword>
<keyword id="KW-0800">Toxin</keyword>
<keyword id="KW-0812">Transmembrane</keyword>
<keyword id="KW-1133">Transmembrane helix</keyword>
<keyword id="KW-0813">Transport</keyword>
<keyword id="KW-1182">Viral ion channel</keyword>
<keyword id="KW-0843">Virulence</keyword>
<organism>
    <name type="scientific">Rotavirus A (isolate RVA/Human/Belgium/B4106/2000/G3P11[14])</name>
    <name type="common">RV-A</name>
    <name type="synonym">Rotavirus A (isolate B4106)</name>
    <dbReference type="NCBI Taxonomy" id="578843"/>
    <lineage>
        <taxon>Viruses</taxon>
        <taxon>Riboviria</taxon>
        <taxon>Orthornavirae</taxon>
        <taxon>Duplornaviricota</taxon>
        <taxon>Resentoviricetes</taxon>
        <taxon>Reovirales</taxon>
        <taxon>Sedoreoviridae</taxon>
        <taxon>Rotavirus</taxon>
        <taxon>Rotavirus A</taxon>
    </lineage>
</organism>
<proteinExistence type="inferred from homology"/>
<reference key="1">
    <citation type="journal article" date="2006" name="J. Virol.">
        <title>Full genomic analysis of human rotavirus strain B4106 and lapine rotavirus strain 30/96 provides evidence for interspecies transmission.</title>
        <authorList>
            <person name="Matthijnssens J."/>
            <person name="Rahman M."/>
            <person name="Martella V."/>
            <person name="Xuelei Y."/>
            <person name="De Vos S."/>
            <person name="De Leener K."/>
            <person name="Ciarlet M."/>
            <person name="Buonavoglia C."/>
            <person name="Van Ranst M."/>
        </authorList>
    </citation>
    <scope>NUCLEOTIDE SEQUENCE [GENOMIC RNA]</scope>
</reference>
<protein>
    <recommendedName>
        <fullName evidence="1">Non-structural glycoprotein 4</fullName>
        <shortName evidence="1">NSP4</shortName>
    </recommendedName>
    <alternativeName>
        <fullName evidence="1">NCVP5</fullName>
    </alternativeName>
    <alternativeName>
        <fullName evidence="1">NS28</fullName>
    </alternativeName>
</protein>
<comment type="function">
    <text evidence="1">Plays an essential role in the virus replication cycle by acting as a viroporin. Creates a pore in the host endoplasmic reticulum and as a consequence releases Ca(2+) in the cytoplasm of infected cell. In turn, high levels of cytoplasmic calcium trigger membrane trafficking and transport of viral ER-associated proteins to viroplasms, sites of viral genome replication and immature particle assembly.</text>
</comment>
<comment type="function">
    <text evidence="1">The secreted form acts as an enterotoxin that causes phospholipase C-dependent elevation of the intracellular calcium concentration in host intestinal mucosa cells. Increased concentration of intracellular calcium disrupts the cytoskeleton and the tight junctions, raising the paracellular permeability. Potentiates chloride ion secretion through a calcium ion-dependent signaling pathway, inducing age-dependent diarrhea. To perform this enterotoxigenic role in vivo, NSP4 is released from infected enterocytes in a soluble form capable of diffusing within the intestinal lumen and interacting with host plasma membrane receptors on neighboring epithelial cells such as integrins ITGA1/ITGB1 and ITGA2/ITGB1.</text>
</comment>
<comment type="subunit">
    <text evidence="1">Homotetramer. Interacts with the immature particle in the viroplasm. Interacts with host CAV1, early and late in infection. Interacts with host integrin ITGA1/ITGB1 heterodimer. Interacts with host integrin ITGA2/ITGB1 heterodimer. Interaction with microtubules blocks trafficking to the Golgi apparatus.</text>
</comment>
<comment type="subcellular location">
    <subcellularLocation>
        <location evidence="1">Host rough endoplasmic reticulum membrane</location>
        <topology evidence="1">Single-pass type III membrane protein</topology>
    </subcellularLocation>
    <subcellularLocation>
        <location evidence="1">Host membrane</location>
        <location evidence="1">Host caveola</location>
        <topology evidence="1">Single-pass type III membrane protein</topology>
    </subcellularLocation>
    <subcellularLocation>
        <location evidence="1">Secreted</location>
    </subcellularLocation>
    <text evidence="1">NSP4 also localizes in vesicular structures which contain autophagosomal markers and associate with viroplasms in virus-infected cells. Additionally, a soluble form of glycosylated NSP4 is secreted despite retention of its transmembrane domain.</text>
</comment>
<comment type="domain">
    <text evidence="1">Binds 1 calcium ion per tetramer.</text>
</comment>
<comment type="PTM">
    <text evidence="1">The N-glycosyl content is primarily Man(9)GlcNAc, with a small amount of Man(8)GlcNAc.</text>
</comment>
<comment type="similarity">
    <text evidence="1">Belongs to the rotavirus NSP4 family.</text>
</comment>
<accession>Q3ZK64</accession>